<keyword id="KW-0413">Isomerase</keyword>
<keyword id="KW-1185">Reference proteome</keyword>
<keyword id="KW-0694">RNA-binding</keyword>
<keyword id="KW-0819">tRNA processing</keyword>
<feature type="chain" id="PRO_0000407396" description="tRNA pseudouridine synthase Pus10">
    <location>
        <begin position="1"/>
        <end position="388"/>
    </location>
</feature>
<feature type="domain" description="THUMP">
    <location>
        <begin position="35"/>
        <end position="159"/>
    </location>
</feature>
<feature type="active site" description="Nucleophile" evidence="1">
    <location>
        <position position="210"/>
    </location>
</feature>
<feature type="binding site" evidence="1">
    <location>
        <position position="274"/>
    </location>
    <ligand>
        <name>substrate</name>
    </ligand>
</feature>
<feature type="binding site" evidence="1">
    <location>
        <position position="346"/>
    </location>
    <ligand>
        <name>substrate</name>
    </ligand>
</feature>
<organism>
    <name type="scientific">Pyrococcus furiosus (strain ATCC 43587 / DSM 3638 / JCM 8422 / Vc1)</name>
    <dbReference type="NCBI Taxonomy" id="186497"/>
    <lineage>
        <taxon>Archaea</taxon>
        <taxon>Methanobacteriati</taxon>
        <taxon>Methanobacteriota</taxon>
        <taxon>Thermococci</taxon>
        <taxon>Thermococcales</taxon>
        <taxon>Thermococcaceae</taxon>
        <taxon>Pyrococcus</taxon>
    </lineage>
</organism>
<sequence>MILEKAREILEEHQLCNHCLGRLFGKLGKGTNEERGRAIRLLLSMETGKEYKEPEKCELCGGVFNNLDKFAELCIKAAEGIEFETFWVGSRFPEEIEKKEEEIWRKFRVVSGEKITKEFNRELGKVIAVRYGKTPVKERPDVVFIVEPFSEKVELQVNPIYVAGRYRKLIRGIPQTPAPGFKESIATIICRAFKKHFHGKCIFKGAGREDVDVRMLGNGRPFVVEIKRPRKRKVNLKDIEEEINQSGKVEVLNLRFITPEEAERILTTRHRKVYEAIVYVKDGITKEEVEKVVKSLKNAEIKQRTPRRVLNSRADLVRVRKVYDVKGELIDDKHFKLRLVTDGGLYIKELISGDRGRTTPSVSEILGKEAWCEILDVLEVLDDVEGDN</sequence>
<dbReference type="EC" id="5.4.99.25" evidence="2 3"/>
<dbReference type="EMBL" id="AE009950">
    <property type="protein sequence ID" value="AAL81263.1"/>
    <property type="molecule type" value="Genomic_DNA"/>
</dbReference>
<dbReference type="RefSeq" id="WP_011012279.1">
    <property type="nucleotide sequence ID" value="NZ_CP023154.1"/>
</dbReference>
<dbReference type="SMR" id="Q8U1R6"/>
<dbReference type="STRING" id="186497.PF1139"/>
<dbReference type="PaxDb" id="186497-PF1139"/>
<dbReference type="KEGG" id="pfu:PF1139"/>
<dbReference type="PATRIC" id="fig|186497.12.peg.1200"/>
<dbReference type="eggNOG" id="arCOG01015">
    <property type="taxonomic scope" value="Archaea"/>
</dbReference>
<dbReference type="HOGENOM" id="CLU_028780_2_0_2"/>
<dbReference type="OrthoDB" id="10348at2157"/>
<dbReference type="PhylomeDB" id="Q8U1R6"/>
<dbReference type="BioCyc" id="MetaCyc:MONOMER-16703"/>
<dbReference type="BRENDA" id="5.4.99.B22">
    <property type="organism ID" value="5243"/>
</dbReference>
<dbReference type="Proteomes" id="UP000001013">
    <property type="component" value="Chromosome"/>
</dbReference>
<dbReference type="GO" id="GO:0009982">
    <property type="term" value="F:pseudouridine synthase activity"/>
    <property type="evidence" value="ECO:0000314"/>
    <property type="project" value="UniProtKB"/>
</dbReference>
<dbReference type="GO" id="GO:0000049">
    <property type="term" value="F:tRNA binding"/>
    <property type="evidence" value="ECO:0007669"/>
    <property type="project" value="InterPro"/>
</dbReference>
<dbReference type="GO" id="GO:0160148">
    <property type="term" value="F:tRNA pseudouridine(55) synthase activity"/>
    <property type="evidence" value="ECO:0007669"/>
    <property type="project" value="UniProtKB-EC"/>
</dbReference>
<dbReference type="GO" id="GO:0031119">
    <property type="term" value="P:tRNA pseudouridine synthesis"/>
    <property type="evidence" value="ECO:0000314"/>
    <property type="project" value="UniProtKB"/>
</dbReference>
<dbReference type="FunFam" id="3.30.70.2510:FF:000001">
    <property type="entry name" value="tRNA pseudouridine synthase Pus10"/>
    <property type="match status" value="1"/>
</dbReference>
<dbReference type="FunFam" id="3.30.70.3190:FF:000001">
    <property type="entry name" value="tRNA pseudouridine synthase Pus10"/>
    <property type="match status" value="1"/>
</dbReference>
<dbReference type="Gene3D" id="3.30.70.2510">
    <property type="match status" value="1"/>
</dbReference>
<dbReference type="Gene3D" id="3.30.70.3190">
    <property type="match status" value="1"/>
</dbReference>
<dbReference type="HAMAP" id="MF_01893">
    <property type="entry name" value="Pus10_arch"/>
    <property type="match status" value="1"/>
</dbReference>
<dbReference type="InterPro" id="IPR020103">
    <property type="entry name" value="PsdUridine_synth_cat_dom_sf"/>
</dbReference>
<dbReference type="InterPro" id="IPR005912">
    <property type="entry name" value="Pus10"/>
</dbReference>
<dbReference type="InterPro" id="IPR039894">
    <property type="entry name" value="Pus10-like"/>
</dbReference>
<dbReference type="InterPro" id="IPR048741">
    <property type="entry name" value="Pus10-like_C"/>
</dbReference>
<dbReference type="InterPro" id="IPR055174">
    <property type="entry name" value="Pus10_THUMP_arc"/>
</dbReference>
<dbReference type="InterPro" id="IPR004114">
    <property type="entry name" value="THUMP_dom"/>
</dbReference>
<dbReference type="NCBIfam" id="TIGR01213">
    <property type="entry name" value="pseudo_Pus10arc"/>
    <property type="match status" value="1"/>
</dbReference>
<dbReference type="PANTHER" id="PTHR21568">
    <property type="entry name" value="TRNA PSEUDOURIDINE SYNTHASE PUS10"/>
    <property type="match status" value="1"/>
</dbReference>
<dbReference type="PANTHER" id="PTHR21568:SF0">
    <property type="entry name" value="TRNA PSEUDOURIDINE SYNTHASE PUS10"/>
    <property type="match status" value="1"/>
</dbReference>
<dbReference type="Pfam" id="PF21238">
    <property type="entry name" value="Pus10_C"/>
    <property type="match status" value="1"/>
</dbReference>
<dbReference type="Pfam" id="PF22023">
    <property type="entry name" value="Pus10_THUMP_arc"/>
    <property type="match status" value="1"/>
</dbReference>
<dbReference type="SUPFAM" id="SSF55120">
    <property type="entry name" value="Pseudouridine synthase"/>
    <property type="match status" value="1"/>
</dbReference>
<dbReference type="PROSITE" id="PS51165">
    <property type="entry name" value="THUMP"/>
    <property type="match status" value="1"/>
</dbReference>
<gene>
    <name type="primary">pus10</name>
    <name type="synonym">psuX</name>
    <name type="ordered locus">PF1139</name>
</gene>
<proteinExistence type="evidence at protein level"/>
<name>PUS10_PYRFU</name>
<evidence type="ECO:0000255" key="1"/>
<evidence type="ECO:0000269" key="2">
    <source>
    </source>
</evidence>
<evidence type="ECO:0000269" key="3">
    <source>
    </source>
</evidence>
<evidence type="ECO:0000305" key="4"/>
<accession>Q8U1R6</accession>
<comment type="function">
    <text evidence="2 3">Responsible for synthesis of pseudouridine from uracil-54 and uracil-55 in the psi GC loop of transfer RNAs.</text>
</comment>
<comment type="catalytic activity">
    <reaction evidence="3">
        <text>uridine(54) in tRNA = pseudouridine(54) in tRNA</text>
        <dbReference type="Rhea" id="RHEA:57876"/>
        <dbReference type="Rhea" id="RHEA-COMP:10193"/>
        <dbReference type="Rhea" id="RHEA-COMP:14141"/>
        <dbReference type="ChEBI" id="CHEBI:65314"/>
        <dbReference type="ChEBI" id="CHEBI:65315"/>
    </reaction>
</comment>
<comment type="catalytic activity">
    <reaction evidence="2 3">
        <text>uridine(55) in tRNA = pseudouridine(55) in tRNA</text>
        <dbReference type="Rhea" id="RHEA:42532"/>
        <dbReference type="Rhea" id="RHEA-COMP:10101"/>
        <dbReference type="Rhea" id="RHEA-COMP:10102"/>
        <dbReference type="ChEBI" id="CHEBI:65314"/>
        <dbReference type="ChEBI" id="CHEBI:65315"/>
        <dbReference type="EC" id="5.4.99.25"/>
    </reaction>
</comment>
<comment type="biophysicochemical properties">
    <temperatureDependence>
        <text evidence="2">Optimum temperature is 70 degrees Celsius.</text>
    </temperatureDependence>
</comment>
<comment type="similarity">
    <text evidence="4">Belongs to the pseudouridine synthase Pus10 family.</text>
</comment>
<protein>
    <recommendedName>
        <fullName>tRNA pseudouridine synthase Pus10</fullName>
        <ecNumber evidence="2 3">5.4.99.25</ecNumber>
    </recommendedName>
    <alternativeName>
        <fullName>tRNA pseudouridine 54/55 synthase</fullName>
        <shortName>Psi54/55 synthase</shortName>
    </alternativeName>
</protein>
<reference key="1">
    <citation type="journal article" date="1999" name="Genetics">
        <title>Divergence of the hyperthermophilic archaea Pyrococcus furiosus and P. horikoshii inferred from complete genomic sequences.</title>
        <authorList>
            <person name="Maeder D.L."/>
            <person name="Weiss R.B."/>
            <person name="Dunn D.M."/>
            <person name="Cherry J.L."/>
            <person name="Gonzalez J.M."/>
            <person name="DiRuggiero J."/>
            <person name="Robb F.T."/>
        </authorList>
    </citation>
    <scope>NUCLEOTIDE SEQUENCE [LARGE SCALE GENOMIC DNA]</scope>
    <source>
        <strain>ATCC 43587 / DSM 3638 / JCM 8422 / Vc1</strain>
    </source>
</reference>
<reference key="2">
    <citation type="journal article" date="2006" name="Nucleic Acids Res.">
        <title>Formation of the conserved pseudouridine at position 55 in archaeal tRNA.</title>
        <authorList>
            <person name="Roovers M."/>
            <person name="Hale C."/>
            <person name="Tricot C."/>
            <person name="Terns M.P."/>
            <person name="Terns R.M."/>
            <person name="Grosjean H."/>
            <person name="Droogmans L."/>
        </authorList>
    </citation>
    <scope>FUNCTION</scope>
    <scope>CATALYTIC ACTIVITY</scope>
    <scope>TEMPERATURE DEPENDENCE</scope>
</reference>
<reference key="3">
    <citation type="journal article" date="2008" name="RNA">
        <title>Archaeal Pus10 proteins can produce both pseudouridine 54 and 55 in tRNA.</title>
        <authorList>
            <person name="Gurha P."/>
            <person name="Gupta R."/>
        </authorList>
    </citation>
    <scope>FUNCTION</scope>
    <scope>CATALYTIC ACTIVITY</scope>
</reference>